<protein>
    <recommendedName>
        <fullName>Uncharacterized protein TP_0482</fullName>
    </recommendedName>
</protein>
<dbReference type="EMBL" id="AE000520">
    <property type="protein sequence ID" value="AAC65471.1"/>
    <property type="molecule type" value="Genomic_DNA"/>
</dbReference>
<dbReference type="PIR" id="H71319">
    <property type="entry name" value="H71319"/>
</dbReference>
<dbReference type="RefSeq" id="WP_010881931.1">
    <property type="nucleotide sequence ID" value="NC_000919.1"/>
</dbReference>
<dbReference type="SMR" id="O83495"/>
<dbReference type="STRING" id="243276.TP_0482"/>
<dbReference type="EnsemblBacteria" id="AAC65471">
    <property type="protein sequence ID" value="AAC65471"/>
    <property type="gene ID" value="TP_0482"/>
</dbReference>
<dbReference type="KEGG" id="tpa:TP_0482"/>
<dbReference type="HOGENOM" id="CLU_986742_0_0_12"/>
<dbReference type="Proteomes" id="UP000000811">
    <property type="component" value="Chromosome"/>
</dbReference>
<keyword id="KW-0175">Coiled coil</keyword>
<keyword id="KW-1185">Reference proteome</keyword>
<feature type="chain" id="PRO_0000202264" description="Uncharacterized protein TP_0482">
    <location>
        <begin position="1"/>
        <end position="282"/>
    </location>
</feature>
<feature type="coiled-coil region" evidence="1">
    <location>
        <begin position="205"/>
        <end position="277"/>
    </location>
</feature>
<accession>O83495</accession>
<gene>
    <name type="ordered locus">TP_0482</name>
</gene>
<evidence type="ECO:0000255" key="1"/>
<sequence length="282" mass="30611">MFERNVPSVLLRNIGVSAADPQARFSVAARVRNASNDAHGFGEPISFLLDVAAGAQDASLRGVVDLRRAHPDLVDVSCTARGIPLAVPAPAEGFPELSGVLGLHTQVFVRKDHSVELKMGARISDSVLRAAPFEPRVLFDVYADVLRQIRQIAFEATVRVSAEGALSISVESDADGAFVRALSRAFAQQVDALRRAVIAEGERFLAQQRRVYAQEIAQVTQLVSRAEDAIAQLGVSSRVIQQKRAEAERLLEAAARKALGEVTKRAADELQNKARDAFRSFF</sequence>
<proteinExistence type="predicted"/>
<organism>
    <name type="scientific">Treponema pallidum (strain Nichols)</name>
    <dbReference type="NCBI Taxonomy" id="243276"/>
    <lineage>
        <taxon>Bacteria</taxon>
        <taxon>Pseudomonadati</taxon>
        <taxon>Spirochaetota</taxon>
        <taxon>Spirochaetia</taxon>
        <taxon>Spirochaetales</taxon>
        <taxon>Treponemataceae</taxon>
        <taxon>Treponema</taxon>
    </lineage>
</organism>
<name>Y482_TREPA</name>
<reference key="1">
    <citation type="journal article" date="1998" name="Science">
        <title>Complete genome sequence of Treponema pallidum, the syphilis spirochete.</title>
        <authorList>
            <person name="Fraser C.M."/>
            <person name="Norris S.J."/>
            <person name="Weinstock G.M."/>
            <person name="White O."/>
            <person name="Sutton G.G."/>
            <person name="Dodson R.J."/>
            <person name="Gwinn M.L."/>
            <person name="Hickey E.K."/>
            <person name="Clayton R.A."/>
            <person name="Ketchum K.A."/>
            <person name="Sodergren E."/>
            <person name="Hardham J.M."/>
            <person name="McLeod M.P."/>
            <person name="Salzberg S.L."/>
            <person name="Peterson J.D."/>
            <person name="Khalak H.G."/>
            <person name="Richardson D.L."/>
            <person name="Howell J.K."/>
            <person name="Chidambaram M."/>
            <person name="Utterback T.R."/>
            <person name="McDonald L.A."/>
            <person name="Artiach P."/>
            <person name="Bowman C."/>
            <person name="Cotton M.D."/>
            <person name="Fujii C."/>
            <person name="Garland S.A."/>
            <person name="Hatch B."/>
            <person name="Horst K."/>
            <person name="Roberts K.M."/>
            <person name="Sandusky M."/>
            <person name="Weidman J.F."/>
            <person name="Smith H.O."/>
            <person name="Venter J.C."/>
        </authorList>
    </citation>
    <scope>NUCLEOTIDE SEQUENCE [LARGE SCALE GENOMIC DNA]</scope>
    <source>
        <strain>Nichols</strain>
    </source>
</reference>